<accession>Q34944</accession>
<geneLocation type="mitochondrion"/>
<sequence length="156" mass="17271">MILTSFMLMMIATTFTLYLASTPIVLGVNILMMALLLASTFASFMSSWFAFLIFLIYIGGMLVMFAYFLALTPNQQISNFNIMPYALITLLTFSALTYTTNIKIPTFSDISQGNSILYMSSTAPFLILLALILLLTMVIVVKLTSRSSGPLRPFSP</sequence>
<protein>
    <recommendedName>
        <fullName>NADH-ubiquinone oxidoreductase chain 6</fullName>
        <ecNumber>7.1.1.2</ecNumber>
    </recommendedName>
    <alternativeName>
        <fullName>NADH dehydrogenase subunit 6</fullName>
    </alternativeName>
</protein>
<gene>
    <name type="primary">ND6</name>
</gene>
<comment type="function">
    <text evidence="1">Core subunit of the mitochondrial membrane respiratory chain NADH dehydrogenase (Complex I) that is believed to belong to the minimal assembly required for catalysis. Complex I functions in the transfer of electrons from NADH to the respiratory chain. The immediate electron acceptor for the enzyme is believed to be ubiquinone (By similarity).</text>
</comment>
<comment type="catalytic activity">
    <reaction>
        <text>a ubiquinone + NADH + 5 H(+)(in) = a ubiquinol + NAD(+) + 4 H(+)(out)</text>
        <dbReference type="Rhea" id="RHEA:29091"/>
        <dbReference type="Rhea" id="RHEA-COMP:9565"/>
        <dbReference type="Rhea" id="RHEA-COMP:9566"/>
        <dbReference type="ChEBI" id="CHEBI:15378"/>
        <dbReference type="ChEBI" id="CHEBI:16389"/>
        <dbReference type="ChEBI" id="CHEBI:17976"/>
        <dbReference type="ChEBI" id="CHEBI:57540"/>
        <dbReference type="ChEBI" id="CHEBI:57945"/>
        <dbReference type="EC" id="7.1.1.2"/>
    </reaction>
</comment>
<comment type="subcellular location">
    <subcellularLocation>
        <location evidence="3">Mitochondrion membrane</location>
        <topology evidence="3">Multi-pass membrane protein</topology>
    </subcellularLocation>
</comment>
<comment type="similarity">
    <text evidence="3">Belongs to the complex I subunit 6 family.</text>
</comment>
<reference key="1">
    <citation type="journal article" date="1995" name="Genetics">
        <title>Complete sequence of the mitochondrial DNA of the annelid worm Lumbricus terrestris.</title>
        <authorList>
            <person name="Boore J.L."/>
            <person name="Brown W.M."/>
        </authorList>
    </citation>
    <scope>NUCLEOTIDE SEQUENCE [GENOMIC DNA]</scope>
</reference>
<proteinExistence type="inferred from homology"/>
<name>NU6M_LUMTE</name>
<dbReference type="EC" id="7.1.1.2"/>
<dbReference type="EMBL" id="U24570">
    <property type="protein sequence ID" value="AAC46868.1"/>
    <property type="molecule type" value="Genomic_DNA"/>
</dbReference>
<dbReference type="PIR" id="S58989">
    <property type="entry name" value="S58989"/>
</dbReference>
<dbReference type="RefSeq" id="NP_008242.1">
    <property type="nucleotide sequence ID" value="NC_001673.1"/>
</dbReference>
<dbReference type="SMR" id="Q34944"/>
<dbReference type="GeneID" id="807919"/>
<dbReference type="CTD" id="4541"/>
<dbReference type="GO" id="GO:0031966">
    <property type="term" value="C:mitochondrial membrane"/>
    <property type="evidence" value="ECO:0007669"/>
    <property type="project" value="UniProtKB-SubCell"/>
</dbReference>
<dbReference type="GO" id="GO:0008137">
    <property type="term" value="F:NADH dehydrogenase (ubiquinone) activity"/>
    <property type="evidence" value="ECO:0007669"/>
    <property type="project" value="UniProtKB-EC"/>
</dbReference>
<organism>
    <name type="scientific">Lumbricus terrestris</name>
    <name type="common">Common earthworm</name>
    <dbReference type="NCBI Taxonomy" id="6398"/>
    <lineage>
        <taxon>Eukaryota</taxon>
        <taxon>Metazoa</taxon>
        <taxon>Spiralia</taxon>
        <taxon>Lophotrochozoa</taxon>
        <taxon>Annelida</taxon>
        <taxon>Clitellata</taxon>
        <taxon>Oligochaeta</taxon>
        <taxon>Crassiclitellata</taxon>
        <taxon>Lumbricina</taxon>
        <taxon>Lumbricidae</taxon>
        <taxon>Lumbricinae</taxon>
        <taxon>Lumbricus</taxon>
    </lineage>
</organism>
<keyword id="KW-0249">Electron transport</keyword>
<keyword id="KW-0472">Membrane</keyword>
<keyword id="KW-0496">Mitochondrion</keyword>
<keyword id="KW-0520">NAD</keyword>
<keyword id="KW-0679">Respiratory chain</keyword>
<keyword id="KW-1278">Translocase</keyword>
<keyword id="KW-0812">Transmembrane</keyword>
<keyword id="KW-1133">Transmembrane helix</keyword>
<keyword id="KW-0813">Transport</keyword>
<keyword id="KW-0830">Ubiquinone</keyword>
<evidence type="ECO:0000250" key="1"/>
<evidence type="ECO:0000255" key="2"/>
<evidence type="ECO:0000305" key="3"/>
<feature type="chain" id="PRO_0000118299" description="NADH-ubiquinone oxidoreductase chain 6">
    <location>
        <begin position="1"/>
        <end position="156"/>
    </location>
</feature>
<feature type="transmembrane region" description="Helical" evidence="2">
    <location>
        <begin position="1"/>
        <end position="21"/>
    </location>
</feature>
<feature type="transmembrane region" description="Helical" evidence="2">
    <location>
        <begin position="24"/>
        <end position="44"/>
    </location>
</feature>
<feature type="transmembrane region" description="Helical" evidence="2">
    <location>
        <begin position="49"/>
        <end position="69"/>
    </location>
</feature>
<feature type="transmembrane region" description="Helical" evidence="2">
    <location>
        <begin position="77"/>
        <end position="97"/>
    </location>
</feature>
<feature type="transmembrane region" description="Helical" evidence="2">
    <location>
        <begin position="121"/>
        <end position="141"/>
    </location>
</feature>